<reference key="1">
    <citation type="journal article" date="2000" name="Proc. Natl. Acad. Sci. U.S.A.">
        <title>Genome sequence of Halobacterium species NRC-1.</title>
        <authorList>
            <person name="Ng W.V."/>
            <person name="Kennedy S.P."/>
            <person name="Mahairas G.G."/>
            <person name="Berquist B."/>
            <person name="Pan M."/>
            <person name="Shukla H.D."/>
            <person name="Lasky S.R."/>
            <person name="Baliga N.S."/>
            <person name="Thorsson V."/>
            <person name="Sbrogna J."/>
            <person name="Swartzell S."/>
            <person name="Weir D."/>
            <person name="Hall J."/>
            <person name="Dahl T.A."/>
            <person name="Welti R."/>
            <person name="Goo Y.A."/>
            <person name="Leithauser B."/>
            <person name="Keller K."/>
            <person name="Cruz R."/>
            <person name="Danson M.J."/>
            <person name="Hough D.W."/>
            <person name="Maddocks D.G."/>
            <person name="Jablonski P.E."/>
            <person name="Krebs M.P."/>
            <person name="Angevine C.M."/>
            <person name="Dale H."/>
            <person name="Isenbarger T.A."/>
            <person name="Peck R.F."/>
            <person name="Pohlschroder M."/>
            <person name="Spudich J.L."/>
            <person name="Jung K.-H."/>
            <person name="Alam M."/>
            <person name="Freitas T."/>
            <person name="Hou S."/>
            <person name="Daniels C.J."/>
            <person name="Dennis P.P."/>
            <person name="Omer A.D."/>
            <person name="Ebhardt H."/>
            <person name="Lowe T.M."/>
            <person name="Liang P."/>
            <person name="Riley M."/>
            <person name="Hood L."/>
            <person name="DasSarma S."/>
        </authorList>
    </citation>
    <scope>NUCLEOTIDE SEQUENCE [LARGE SCALE GENOMIC DNA]</scope>
    <source>
        <strain>ATCC 700922 / JCM 11081 / NRC-1</strain>
    </source>
</reference>
<feature type="chain" id="PRO_0000095268" description="Adenylosuccinate synthetase">
    <location>
        <begin position="1"/>
        <end position="440"/>
    </location>
</feature>
<feature type="active site" description="Proton acceptor" evidence="1">
    <location>
        <position position="12"/>
    </location>
</feature>
<feature type="active site" description="Proton donor" evidence="1">
    <location>
        <position position="40"/>
    </location>
</feature>
<feature type="binding site" evidence="1">
    <location>
        <begin position="11"/>
        <end position="17"/>
    </location>
    <ligand>
        <name>GTP</name>
        <dbReference type="ChEBI" id="CHEBI:37565"/>
    </ligand>
</feature>
<feature type="binding site" description="in other chain" evidence="1">
    <location>
        <begin position="12"/>
        <end position="15"/>
    </location>
    <ligand>
        <name>IMP</name>
        <dbReference type="ChEBI" id="CHEBI:58053"/>
        <note>ligand shared between dimeric partners</note>
    </ligand>
</feature>
<feature type="binding site" evidence="1">
    <location>
        <position position="12"/>
    </location>
    <ligand>
        <name>Mg(2+)</name>
        <dbReference type="ChEBI" id="CHEBI:18420"/>
    </ligand>
</feature>
<feature type="binding site" description="in other chain" evidence="1">
    <location>
        <begin position="37"/>
        <end position="40"/>
    </location>
    <ligand>
        <name>IMP</name>
        <dbReference type="ChEBI" id="CHEBI:58053"/>
        <note>ligand shared between dimeric partners</note>
    </ligand>
</feature>
<feature type="binding site" evidence="1">
    <location>
        <begin position="39"/>
        <end position="41"/>
    </location>
    <ligand>
        <name>GTP</name>
        <dbReference type="ChEBI" id="CHEBI:37565"/>
    </ligand>
</feature>
<feature type="binding site" evidence="1">
    <location>
        <position position="39"/>
    </location>
    <ligand>
        <name>Mg(2+)</name>
        <dbReference type="ChEBI" id="CHEBI:18420"/>
    </ligand>
</feature>
<feature type="binding site" description="in other chain" evidence="1">
    <location>
        <position position="127"/>
    </location>
    <ligand>
        <name>IMP</name>
        <dbReference type="ChEBI" id="CHEBI:58053"/>
        <note>ligand shared between dimeric partners</note>
    </ligand>
</feature>
<feature type="binding site" evidence="1">
    <location>
        <position position="141"/>
    </location>
    <ligand>
        <name>IMP</name>
        <dbReference type="ChEBI" id="CHEBI:58053"/>
        <note>ligand shared between dimeric partners</note>
    </ligand>
</feature>
<feature type="binding site" description="in other chain" evidence="1">
    <location>
        <position position="230"/>
    </location>
    <ligand>
        <name>IMP</name>
        <dbReference type="ChEBI" id="CHEBI:58053"/>
        <note>ligand shared between dimeric partners</note>
    </ligand>
</feature>
<feature type="binding site" description="in other chain" evidence="1">
    <location>
        <position position="245"/>
    </location>
    <ligand>
        <name>IMP</name>
        <dbReference type="ChEBI" id="CHEBI:58053"/>
        <note>ligand shared between dimeric partners</note>
    </ligand>
</feature>
<feature type="binding site" evidence="1">
    <location>
        <begin position="307"/>
        <end position="313"/>
    </location>
    <ligand>
        <name>substrate</name>
    </ligand>
</feature>
<feature type="binding site" description="in other chain" evidence="1">
    <location>
        <position position="311"/>
    </location>
    <ligand>
        <name>IMP</name>
        <dbReference type="ChEBI" id="CHEBI:58053"/>
        <note>ligand shared between dimeric partners</note>
    </ligand>
</feature>
<feature type="binding site" evidence="1">
    <location>
        <position position="313"/>
    </location>
    <ligand>
        <name>GTP</name>
        <dbReference type="ChEBI" id="CHEBI:37565"/>
    </ligand>
</feature>
<feature type="binding site" evidence="1">
    <location>
        <begin position="339"/>
        <end position="341"/>
    </location>
    <ligand>
        <name>GTP</name>
        <dbReference type="ChEBI" id="CHEBI:37565"/>
    </ligand>
</feature>
<feature type="binding site" evidence="1">
    <location>
        <begin position="424"/>
        <end position="426"/>
    </location>
    <ligand>
        <name>GTP</name>
        <dbReference type="ChEBI" id="CHEBI:37565"/>
    </ligand>
</feature>
<proteinExistence type="inferred from homology"/>
<organism>
    <name type="scientific">Halobacterium salinarum (strain ATCC 700922 / JCM 11081 / NRC-1)</name>
    <name type="common">Halobacterium halobium</name>
    <dbReference type="NCBI Taxonomy" id="64091"/>
    <lineage>
        <taxon>Archaea</taxon>
        <taxon>Methanobacteriati</taxon>
        <taxon>Methanobacteriota</taxon>
        <taxon>Stenosarchaea group</taxon>
        <taxon>Halobacteria</taxon>
        <taxon>Halobacteriales</taxon>
        <taxon>Halobacteriaceae</taxon>
        <taxon>Halobacterium</taxon>
        <taxon>Halobacterium salinarum NRC-34001</taxon>
    </lineage>
</organism>
<sequence>MTVTIVGAQLGDEGKGGVVDLFGDATDVVVRYQGGDNAGHTVVAGGEEYKLSLVPSGVVRGKTGVLGNGCVINPETLFEEVDALRERGLDPDVRLAKRAHVILPFHRELDGAEEAAKADSDSEIGTTGRGIGPTYEDKIGRRGVRVGDLLNEDALRDRLEYLVDAKRAIYEDVYGFDASETDGAFDIDAIHEQCLAYADRIRDEDLAVNAGDYLADRIADGDNVMLEGAQGTSLDIDHGNFPYVTSSNPTAGYAATGSGLGPTTVGQGEIVGIIKAYLSRVGSGPMPTELDGDQAEYIREEGGEYGTVTGRPRRVGWLDMPMLRHAARANGFTGIAINHLDVLAELDEVNVGHAYERDGERIHTLPATTEAWRDCDPVMKSFDGWSAFDPAVVADAGYSALPDNAQAYVEYVEAELDTPAYVLGVGPGREESVIRQNPFE</sequence>
<name>PURA_HALSA</name>
<accession>Q9HQM6</accession>
<evidence type="ECO:0000255" key="1">
    <source>
        <dbReference type="HAMAP-Rule" id="MF_00011"/>
    </source>
</evidence>
<gene>
    <name evidence="1" type="primary">purA</name>
    <name type="ordered locus">VNG_1089G</name>
</gene>
<protein>
    <recommendedName>
        <fullName evidence="1">Adenylosuccinate synthetase</fullName>
        <shortName evidence="1">AMPSase</shortName>
        <shortName evidence="1">AdSS</shortName>
        <ecNumber evidence="1">6.3.4.4</ecNumber>
    </recommendedName>
    <alternativeName>
        <fullName evidence="1">IMP--aspartate ligase</fullName>
    </alternativeName>
</protein>
<keyword id="KW-0963">Cytoplasm</keyword>
<keyword id="KW-0342">GTP-binding</keyword>
<keyword id="KW-0436">Ligase</keyword>
<keyword id="KW-0460">Magnesium</keyword>
<keyword id="KW-0479">Metal-binding</keyword>
<keyword id="KW-0547">Nucleotide-binding</keyword>
<keyword id="KW-0658">Purine biosynthesis</keyword>
<keyword id="KW-1185">Reference proteome</keyword>
<comment type="function">
    <text evidence="1">Plays an important role in the de novo pathway of purine nucleotide biosynthesis. Catalyzes the first committed step in the biosynthesis of AMP from IMP.</text>
</comment>
<comment type="catalytic activity">
    <reaction evidence="1">
        <text>IMP + L-aspartate + GTP = N(6)-(1,2-dicarboxyethyl)-AMP + GDP + phosphate + 2 H(+)</text>
        <dbReference type="Rhea" id="RHEA:15753"/>
        <dbReference type="ChEBI" id="CHEBI:15378"/>
        <dbReference type="ChEBI" id="CHEBI:29991"/>
        <dbReference type="ChEBI" id="CHEBI:37565"/>
        <dbReference type="ChEBI" id="CHEBI:43474"/>
        <dbReference type="ChEBI" id="CHEBI:57567"/>
        <dbReference type="ChEBI" id="CHEBI:58053"/>
        <dbReference type="ChEBI" id="CHEBI:58189"/>
        <dbReference type="EC" id="6.3.4.4"/>
    </reaction>
</comment>
<comment type="cofactor">
    <cofactor evidence="1">
        <name>Mg(2+)</name>
        <dbReference type="ChEBI" id="CHEBI:18420"/>
    </cofactor>
    <text evidence="1">Binds 1 Mg(2+) ion per subunit.</text>
</comment>
<comment type="pathway">
    <text evidence="1">Purine metabolism; AMP biosynthesis via de novo pathway; AMP from IMP: step 1/2.</text>
</comment>
<comment type="subunit">
    <text evidence="1">Homodimer.</text>
</comment>
<comment type="subcellular location">
    <subcellularLocation>
        <location evidence="1">Cytoplasm</location>
    </subcellularLocation>
</comment>
<comment type="similarity">
    <text evidence="1">Belongs to the adenylosuccinate synthetase family.</text>
</comment>
<dbReference type="EC" id="6.3.4.4" evidence="1"/>
<dbReference type="EMBL" id="AE004437">
    <property type="protein sequence ID" value="AAG19487.1"/>
    <property type="molecule type" value="Genomic_DNA"/>
</dbReference>
<dbReference type="PIR" id="C84265">
    <property type="entry name" value="C84265"/>
</dbReference>
<dbReference type="RefSeq" id="WP_010902782.1">
    <property type="nucleotide sequence ID" value="NC_002607.1"/>
</dbReference>
<dbReference type="SMR" id="Q9HQM6"/>
<dbReference type="FunCoup" id="Q9HQM6">
    <property type="interactions" value="239"/>
</dbReference>
<dbReference type="STRING" id="64091.VNG_1089G"/>
<dbReference type="PaxDb" id="64091-VNG_1089G"/>
<dbReference type="KEGG" id="hal:VNG_1089G"/>
<dbReference type="PATRIC" id="fig|64091.14.peg.832"/>
<dbReference type="HOGENOM" id="CLU_029848_0_2_2"/>
<dbReference type="InParanoid" id="Q9HQM6"/>
<dbReference type="OrthoDB" id="372247at2157"/>
<dbReference type="PhylomeDB" id="Q9HQM6"/>
<dbReference type="UniPathway" id="UPA00075">
    <property type="reaction ID" value="UER00335"/>
</dbReference>
<dbReference type="Proteomes" id="UP000000554">
    <property type="component" value="Chromosome"/>
</dbReference>
<dbReference type="GO" id="GO:0005737">
    <property type="term" value="C:cytoplasm"/>
    <property type="evidence" value="ECO:0000318"/>
    <property type="project" value="GO_Central"/>
</dbReference>
<dbReference type="GO" id="GO:0004019">
    <property type="term" value="F:adenylosuccinate synthase activity"/>
    <property type="evidence" value="ECO:0000318"/>
    <property type="project" value="GO_Central"/>
</dbReference>
<dbReference type="GO" id="GO:0005525">
    <property type="term" value="F:GTP binding"/>
    <property type="evidence" value="ECO:0007669"/>
    <property type="project" value="UniProtKB-UniRule"/>
</dbReference>
<dbReference type="GO" id="GO:0000287">
    <property type="term" value="F:magnesium ion binding"/>
    <property type="evidence" value="ECO:0007669"/>
    <property type="project" value="UniProtKB-UniRule"/>
</dbReference>
<dbReference type="GO" id="GO:0044208">
    <property type="term" value="P:'de novo' AMP biosynthetic process"/>
    <property type="evidence" value="ECO:0000318"/>
    <property type="project" value="GO_Central"/>
</dbReference>
<dbReference type="GO" id="GO:0046040">
    <property type="term" value="P:IMP metabolic process"/>
    <property type="evidence" value="ECO:0000318"/>
    <property type="project" value="GO_Central"/>
</dbReference>
<dbReference type="CDD" id="cd03108">
    <property type="entry name" value="AdSS"/>
    <property type="match status" value="1"/>
</dbReference>
<dbReference type="FunFam" id="1.10.300.10:FF:000001">
    <property type="entry name" value="Adenylosuccinate synthetase"/>
    <property type="match status" value="1"/>
</dbReference>
<dbReference type="FunFam" id="3.90.170.10:FF:000001">
    <property type="entry name" value="Adenylosuccinate synthetase"/>
    <property type="match status" value="1"/>
</dbReference>
<dbReference type="Gene3D" id="3.40.440.10">
    <property type="entry name" value="Adenylosuccinate Synthetase, subunit A, domain 1"/>
    <property type="match status" value="1"/>
</dbReference>
<dbReference type="Gene3D" id="1.10.300.10">
    <property type="entry name" value="Adenylosuccinate Synthetase, subunit A, domain 2"/>
    <property type="match status" value="1"/>
</dbReference>
<dbReference type="Gene3D" id="3.90.170.10">
    <property type="entry name" value="Adenylosuccinate Synthetase, subunit A, domain 3"/>
    <property type="match status" value="1"/>
</dbReference>
<dbReference type="HAMAP" id="MF_00011">
    <property type="entry name" value="Adenylosucc_synth"/>
    <property type="match status" value="1"/>
</dbReference>
<dbReference type="InterPro" id="IPR018220">
    <property type="entry name" value="Adenylosuccin_syn_GTP-bd"/>
</dbReference>
<dbReference type="InterPro" id="IPR033128">
    <property type="entry name" value="Adenylosuccin_syn_Lys_AS"/>
</dbReference>
<dbReference type="InterPro" id="IPR042109">
    <property type="entry name" value="Adenylosuccinate_synth_dom1"/>
</dbReference>
<dbReference type="InterPro" id="IPR042110">
    <property type="entry name" value="Adenylosuccinate_synth_dom2"/>
</dbReference>
<dbReference type="InterPro" id="IPR042111">
    <property type="entry name" value="Adenylosuccinate_synth_dom3"/>
</dbReference>
<dbReference type="InterPro" id="IPR001114">
    <property type="entry name" value="Adenylosuccinate_synthetase"/>
</dbReference>
<dbReference type="InterPro" id="IPR027417">
    <property type="entry name" value="P-loop_NTPase"/>
</dbReference>
<dbReference type="NCBIfam" id="NF002223">
    <property type="entry name" value="PRK01117.1"/>
    <property type="match status" value="1"/>
</dbReference>
<dbReference type="NCBIfam" id="NF010357">
    <property type="entry name" value="PRK13785.1"/>
    <property type="match status" value="1"/>
</dbReference>
<dbReference type="NCBIfam" id="TIGR00184">
    <property type="entry name" value="purA"/>
    <property type="match status" value="1"/>
</dbReference>
<dbReference type="PANTHER" id="PTHR11846">
    <property type="entry name" value="ADENYLOSUCCINATE SYNTHETASE"/>
    <property type="match status" value="1"/>
</dbReference>
<dbReference type="PANTHER" id="PTHR11846:SF0">
    <property type="entry name" value="ADENYLOSUCCINATE SYNTHETASE"/>
    <property type="match status" value="1"/>
</dbReference>
<dbReference type="Pfam" id="PF00709">
    <property type="entry name" value="Adenylsucc_synt"/>
    <property type="match status" value="1"/>
</dbReference>
<dbReference type="SMART" id="SM00788">
    <property type="entry name" value="Adenylsucc_synt"/>
    <property type="match status" value="1"/>
</dbReference>
<dbReference type="SUPFAM" id="SSF52540">
    <property type="entry name" value="P-loop containing nucleoside triphosphate hydrolases"/>
    <property type="match status" value="1"/>
</dbReference>
<dbReference type="PROSITE" id="PS01266">
    <property type="entry name" value="ADENYLOSUCCIN_SYN_1"/>
    <property type="match status" value="1"/>
</dbReference>
<dbReference type="PROSITE" id="PS00513">
    <property type="entry name" value="ADENYLOSUCCIN_SYN_2"/>
    <property type="match status" value="1"/>
</dbReference>